<organism>
    <name type="scientific">Arabidopsis thaliana</name>
    <name type="common">Mouse-ear cress</name>
    <dbReference type="NCBI Taxonomy" id="3702"/>
    <lineage>
        <taxon>Eukaryota</taxon>
        <taxon>Viridiplantae</taxon>
        <taxon>Streptophyta</taxon>
        <taxon>Embryophyta</taxon>
        <taxon>Tracheophyta</taxon>
        <taxon>Spermatophyta</taxon>
        <taxon>Magnoliopsida</taxon>
        <taxon>eudicotyledons</taxon>
        <taxon>Gunneridae</taxon>
        <taxon>Pentapetalae</taxon>
        <taxon>rosids</taxon>
        <taxon>malvids</taxon>
        <taxon>Brassicales</taxon>
        <taxon>Brassicaceae</taxon>
        <taxon>Camelineae</taxon>
        <taxon>Arabidopsis</taxon>
    </lineage>
</organism>
<gene>
    <name type="primary">ACS8</name>
    <name type="ordered locus">At4g37770</name>
    <name type="ORF">T28I19.50</name>
</gene>
<evidence type="ECO:0000250" key="1"/>
<evidence type="ECO:0000269" key="2">
    <source>
    </source>
</evidence>
<evidence type="ECO:0000269" key="3">
    <source>
    </source>
</evidence>
<evidence type="ECO:0000305" key="4"/>
<comment type="function">
    <text>1-aminocyclopropane-1-carboxylate synthase (ACS) enzymes catalyze the conversion of S-adenosyl-L-methionine (SAM) into 1-aminocyclopropane-1-carboxylate (ACC), a direct precursor of ethylene.</text>
</comment>
<comment type="catalytic activity">
    <reaction evidence="2">
        <text>S-adenosyl-L-methionine = 1-aminocyclopropane-1-carboxylate + S-methyl-5'-thioadenosine + H(+)</text>
        <dbReference type="Rhea" id="RHEA:21744"/>
        <dbReference type="ChEBI" id="CHEBI:15378"/>
        <dbReference type="ChEBI" id="CHEBI:17509"/>
        <dbReference type="ChEBI" id="CHEBI:58360"/>
        <dbReference type="ChEBI" id="CHEBI:59789"/>
        <dbReference type="EC" id="4.4.1.14"/>
    </reaction>
</comment>
<comment type="cofactor">
    <cofactor>
        <name>pyridoxal 5'-phosphate</name>
        <dbReference type="ChEBI" id="CHEBI:597326"/>
    </cofactor>
</comment>
<comment type="biophysicochemical properties">
    <kinetics>
        <KM>15 uM for AdoMet</KM>
        <Vmax>143.0 uM/h/mg enzyme</Vmax>
    </kinetics>
    <phDependence>
        <text>Optimum pH is 8.2.</text>
    </phDependence>
</comment>
<comment type="pathway">
    <text>Alkene biosynthesis; ethylene biosynthesis via S-adenosyl-L-methionine; ethylene from S-adenosyl-L-methionine: step 1/2.</text>
</comment>
<comment type="subunit">
    <text evidence="1 3">Homodimer and heterodimer. In vivo, the relevance of heterodimerization with other ACS enzymes is however unsure (By similarity). Interacts with GRF3.</text>
</comment>
<comment type="interaction">
    <interactant intactId="EBI-2357693">
        <id>Q9T065</id>
    </interactant>
    <interactant intactId="EBI-2436015">
        <id>Q43309</id>
        <label>ACS4</label>
    </interactant>
    <organismsDiffer>false</organismsDiffer>
    <experiments>2</experiments>
</comment>
<comment type="interaction">
    <interactant intactId="EBI-2357693">
        <id>Q9T065</id>
    </interactant>
    <interactant intactId="EBI-2357693">
        <id>Q9T065</id>
        <label>ACS8</label>
    </interactant>
    <organismsDiffer>false</organismsDiffer>
    <experiments>2</experiments>
</comment>
<comment type="tissue specificity">
    <text evidence="2">Expressed in roots. Expressed at low level in flowers and siliques.</text>
</comment>
<comment type="induction">
    <text evidence="2">By indole-3-acetic acid (IAA) and cycloheximide (CHX).</text>
</comment>
<comment type="PTM">
    <text>May be processed at its C-terminus.</text>
</comment>
<comment type="miscellaneous">
    <text>The stability of ACS proteins, and the regulation of such stability, play a central role in ethylene biosynthesis.</text>
</comment>
<comment type="similarity">
    <text evidence="4">Belongs to the class-I pyridoxal-phosphate-dependent aminotransferase family.</text>
</comment>
<name>1A18_ARATH</name>
<feature type="chain" id="PRO_0000123902" description="1-aminocyclopropane-1-carboxylate synthase 8">
    <location>
        <begin position="1"/>
        <end position="469"/>
    </location>
</feature>
<feature type="binding site" evidence="1">
    <location>
        <position position="47"/>
    </location>
    <ligand>
        <name>substrate</name>
    </ligand>
</feature>
<feature type="binding site" evidence="1">
    <location>
        <position position="85"/>
    </location>
    <ligand>
        <name>substrate</name>
    </ligand>
</feature>
<feature type="modified residue" description="N6-(pyridoxal phosphate)lysine" evidence="1">
    <location>
        <position position="272"/>
    </location>
</feature>
<sequence length="469" mass="53371">MGLLSKKASCNTHGQDSSYFWGWEEYEKNPYDEIKNPDGIIQMGLAENQLSFDLIESWLAKNPDAANFQREGQSIFRELALFQDYHGLPSFKNAMADFMSENRGNRVSFNPNKLVLTAGATPANETLMFCLADPGDAFLLPTPYYPGFDRDLKWRTGAEIVPIQCKSANGFRITKVALEEAYEQAQKLNLKVKGVLITNPSNPLGTTTTRTELNHLLDFISRKKIHLISDEIYSGTVFTNPGFISVMEVLKDRKLENTDVFDRVHIVYSLSKDLGLPGFRVGVIYSNDDFVVSAATKMSSFGLISSQTQYLLSALLSDKTFTKNYLEENQIRLKNRHKKLVSGLEAAGIECLKSNAGLFCWVDMRHLLKSNTFEAEIELWKKIVYEVKLNISPGSSCHCNEPGWFRVCFANLSEETLKVALDRLKRFVDGPSPTRRSQSEHQRLKNLRKMKVSNWVFRLSFHDREPEER</sequence>
<proteinExistence type="evidence at protein level"/>
<keyword id="KW-0266">Ethylene biosynthesis</keyword>
<keyword id="KW-0292">Fruit ripening</keyword>
<keyword id="KW-0456">Lyase</keyword>
<keyword id="KW-0663">Pyridoxal phosphate</keyword>
<keyword id="KW-1185">Reference proteome</keyword>
<keyword id="KW-0949">S-adenosyl-L-methionine</keyword>
<accession>Q9T065</accession>
<dbReference type="EC" id="4.4.1.14"/>
<dbReference type="EMBL" id="AL035709">
    <property type="protein sequence ID" value="CAB38925.1"/>
    <property type="molecule type" value="Genomic_DNA"/>
</dbReference>
<dbReference type="EMBL" id="AL161592">
    <property type="protein sequence ID" value="CAB80442.1"/>
    <property type="molecule type" value="Genomic_DNA"/>
</dbReference>
<dbReference type="EMBL" id="CP002687">
    <property type="protein sequence ID" value="AEE86836.1"/>
    <property type="molecule type" value="Genomic_DNA"/>
</dbReference>
<dbReference type="EMBL" id="AF334712">
    <property type="protein sequence ID" value="AAG50090.1"/>
    <property type="molecule type" value="mRNA"/>
</dbReference>
<dbReference type="PIR" id="T06024">
    <property type="entry name" value="T06024"/>
</dbReference>
<dbReference type="RefSeq" id="NP_195491.1">
    <property type="nucleotide sequence ID" value="NM_119939.3"/>
</dbReference>
<dbReference type="SMR" id="Q9T065"/>
<dbReference type="BioGRID" id="15214">
    <property type="interactions" value="2"/>
</dbReference>
<dbReference type="FunCoup" id="Q9T065">
    <property type="interactions" value="285"/>
</dbReference>
<dbReference type="IntAct" id="Q9T065">
    <property type="interactions" value="2"/>
</dbReference>
<dbReference type="STRING" id="3702.Q9T065"/>
<dbReference type="GlyGen" id="Q9T065">
    <property type="glycosylation" value="1 site"/>
</dbReference>
<dbReference type="PaxDb" id="3702-AT4G37770.1"/>
<dbReference type="EnsemblPlants" id="AT4G37770.1">
    <property type="protein sequence ID" value="AT4G37770.1"/>
    <property type="gene ID" value="AT4G37770"/>
</dbReference>
<dbReference type="GeneID" id="829933"/>
<dbReference type="Gramene" id="AT4G37770.1">
    <property type="protein sequence ID" value="AT4G37770.1"/>
    <property type="gene ID" value="AT4G37770"/>
</dbReference>
<dbReference type="KEGG" id="ath:AT4G37770"/>
<dbReference type="Araport" id="AT4G37770"/>
<dbReference type="TAIR" id="AT4G37770">
    <property type="gene designation" value="ACS8"/>
</dbReference>
<dbReference type="eggNOG" id="KOG0256">
    <property type="taxonomic scope" value="Eukaryota"/>
</dbReference>
<dbReference type="HOGENOM" id="CLU_017584_1_0_1"/>
<dbReference type="InParanoid" id="Q9T065"/>
<dbReference type="OMA" id="HIAQKCL"/>
<dbReference type="PhylomeDB" id="Q9T065"/>
<dbReference type="SABIO-RK" id="Q9T065"/>
<dbReference type="UniPathway" id="UPA00384">
    <property type="reaction ID" value="UER00562"/>
</dbReference>
<dbReference type="PRO" id="PR:Q9T065"/>
<dbReference type="Proteomes" id="UP000006548">
    <property type="component" value="Chromosome 4"/>
</dbReference>
<dbReference type="ExpressionAtlas" id="Q9T065">
    <property type="expression patterns" value="baseline and differential"/>
</dbReference>
<dbReference type="GO" id="GO:0016847">
    <property type="term" value="F:1-aminocyclopropane-1-carboxylate synthase activity"/>
    <property type="evidence" value="ECO:0000314"/>
    <property type="project" value="TAIR"/>
</dbReference>
<dbReference type="GO" id="GO:0042802">
    <property type="term" value="F:identical protein binding"/>
    <property type="evidence" value="ECO:0000353"/>
    <property type="project" value="IntAct"/>
</dbReference>
<dbReference type="GO" id="GO:0030170">
    <property type="term" value="F:pyridoxal phosphate binding"/>
    <property type="evidence" value="ECO:0007669"/>
    <property type="project" value="InterPro"/>
</dbReference>
<dbReference type="GO" id="GO:0009693">
    <property type="term" value="P:ethylene biosynthetic process"/>
    <property type="evidence" value="ECO:0000304"/>
    <property type="project" value="TAIR"/>
</dbReference>
<dbReference type="GO" id="GO:0009835">
    <property type="term" value="P:fruit ripening"/>
    <property type="evidence" value="ECO:0007669"/>
    <property type="project" value="UniProtKB-KW"/>
</dbReference>
<dbReference type="CDD" id="cd00609">
    <property type="entry name" value="AAT_like"/>
    <property type="match status" value="1"/>
</dbReference>
<dbReference type="FunFam" id="3.90.1150.10:FF:000038">
    <property type="entry name" value="1-aminocyclopropane-1-carboxylate synthase 2"/>
    <property type="match status" value="1"/>
</dbReference>
<dbReference type="FunFam" id="3.40.640.10:FF:000051">
    <property type="entry name" value="1-aminocyclopropane-1-carboxylate synthase 3"/>
    <property type="match status" value="1"/>
</dbReference>
<dbReference type="Gene3D" id="3.90.1150.10">
    <property type="entry name" value="Aspartate Aminotransferase, domain 1"/>
    <property type="match status" value="1"/>
</dbReference>
<dbReference type="Gene3D" id="3.40.640.10">
    <property type="entry name" value="Type I PLP-dependent aspartate aminotransferase-like (Major domain)"/>
    <property type="match status" value="1"/>
</dbReference>
<dbReference type="InterPro" id="IPR004839">
    <property type="entry name" value="Aminotransferase_I/II_large"/>
</dbReference>
<dbReference type="InterPro" id="IPR050478">
    <property type="entry name" value="Ethylene_sulfur-biosynth"/>
</dbReference>
<dbReference type="InterPro" id="IPR004838">
    <property type="entry name" value="NHTrfase_class1_PyrdxlP-BS"/>
</dbReference>
<dbReference type="InterPro" id="IPR015424">
    <property type="entry name" value="PyrdxlP-dep_Trfase"/>
</dbReference>
<dbReference type="InterPro" id="IPR015421">
    <property type="entry name" value="PyrdxlP-dep_Trfase_major"/>
</dbReference>
<dbReference type="InterPro" id="IPR015422">
    <property type="entry name" value="PyrdxlP-dep_Trfase_small"/>
</dbReference>
<dbReference type="PANTHER" id="PTHR43795:SF81">
    <property type="entry name" value="1-AMINOCYCLOPROPANE-1-CARBOXYLATE SYNTHASE 8"/>
    <property type="match status" value="1"/>
</dbReference>
<dbReference type="PANTHER" id="PTHR43795">
    <property type="entry name" value="BIFUNCTIONAL ASPARTATE AMINOTRANSFERASE AND GLUTAMATE/ASPARTATE-PREPHENATE AMINOTRANSFERASE-RELATED"/>
    <property type="match status" value="1"/>
</dbReference>
<dbReference type="Pfam" id="PF00155">
    <property type="entry name" value="Aminotran_1_2"/>
    <property type="match status" value="1"/>
</dbReference>
<dbReference type="PRINTS" id="PR00753">
    <property type="entry name" value="ACCSYNTHASE"/>
</dbReference>
<dbReference type="SUPFAM" id="SSF53383">
    <property type="entry name" value="PLP-dependent transferases"/>
    <property type="match status" value="1"/>
</dbReference>
<dbReference type="PROSITE" id="PS00105">
    <property type="entry name" value="AA_TRANSFER_CLASS_1"/>
    <property type="match status" value="1"/>
</dbReference>
<reference key="1">
    <citation type="journal article" date="1999" name="Nature">
        <title>Sequence and analysis of chromosome 4 of the plant Arabidopsis thaliana.</title>
        <authorList>
            <person name="Mayer K.F.X."/>
            <person name="Schueller C."/>
            <person name="Wambutt R."/>
            <person name="Murphy G."/>
            <person name="Volckaert G."/>
            <person name="Pohl T."/>
            <person name="Duesterhoeft A."/>
            <person name="Stiekema W."/>
            <person name="Entian K.-D."/>
            <person name="Terryn N."/>
            <person name="Harris B."/>
            <person name="Ansorge W."/>
            <person name="Brandt P."/>
            <person name="Grivell L.A."/>
            <person name="Rieger M."/>
            <person name="Weichselgartner M."/>
            <person name="de Simone V."/>
            <person name="Obermaier B."/>
            <person name="Mache R."/>
            <person name="Mueller M."/>
            <person name="Kreis M."/>
            <person name="Delseny M."/>
            <person name="Puigdomenech P."/>
            <person name="Watson M."/>
            <person name="Schmidtheini T."/>
            <person name="Reichert B."/>
            <person name="Portetelle D."/>
            <person name="Perez-Alonso M."/>
            <person name="Boutry M."/>
            <person name="Bancroft I."/>
            <person name="Vos P."/>
            <person name="Hoheisel J."/>
            <person name="Zimmermann W."/>
            <person name="Wedler H."/>
            <person name="Ridley P."/>
            <person name="Langham S.-A."/>
            <person name="McCullagh B."/>
            <person name="Bilham L."/>
            <person name="Robben J."/>
            <person name="van der Schueren J."/>
            <person name="Grymonprez B."/>
            <person name="Chuang Y.-J."/>
            <person name="Vandenbussche F."/>
            <person name="Braeken M."/>
            <person name="Weltjens I."/>
            <person name="Voet M."/>
            <person name="Bastiaens I."/>
            <person name="Aert R."/>
            <person name="Defoor E."/>
            <person name="Weitzenegger T."/>
            <person name="Bothe G."/>
            <person name="Ramsperger U."/>
            <person name="Hilbert H."/>
            <person name="Braun M."/>
            <person name="Holzer E."/>
            <person name="Brandt A."/>
            <person name="Peters S."/>
            <person name="van Staveren M."/>
            <person name="Dirkse W."/>
            <person name="Mooijman P."/>
            <person name="Klein Lankhorst R."/>
            <person name="Rose M."/>
            <person name="Hauf J."/>
            <person name="Koetter P."/>
            <person name="Berneiser S."/>
            <person name="Hempel S."/>
            <person name="Feldpausch M."/>
            <person name="Lamberth S."/>
            <person name="Van den Daele H."/>
            <person name="De Keyser A."/>
            <person name="Buysshaert C."/>
            <person name="Gielen J."/>
            <person name="Villarroel R."/>
            <person name="De Clercq R."/>
            <person name="van Montagu M."/>
            <person name="Rogers J."/>
            <person name="Cronin A."/>
            <person name="Quail M.A."/>
            <person name="Bray-Allen S."/>
            <person name="Clark L."/>
            <person name="Doggett J."/>
            <person name="Hall S."/>
            <person name="Kay M."/>
            <person name="Lennard N."/>
            <person name="McLay K."/>
            <person name="Mayes R."/>
            <person name="Pettett A."/>
            <person name="Rajandream M.A."/>
            <person name="Lyne M."/>
            <person name="Benes V."/>
            <person name="Rechmann S."/>
            <person name="Borkova D."/>
            <person name="Bloecker H."/>
            <person name="Scharfe M."/>
            <person name="Grimm M."/>
            <person name="Loehnert T.-H."/>
            <person name="Dose S."/>
            <person name="de Haan M."/>
            <person name="Maarse A.C."/>
            <person name="Schaefer M."/>
            <person name="Mueller-Auer S."/>
            <person name="Gabel C."/>
            <person name="Fuchs M."/>
            <person name="Fartmann B."/>
            <person name="Granderath K."/>
            <person name="Dauner D."/>
            <person name="Herzl A."/>
            <person name="Neumann S."/>
            <person name="Argiriou A."/>
            <person name="Vitale D."/>
            <person name="Liguori R."/>
            <person name="Piravandi E."/>
            <person name="Massenet O."/>
            <person name="Quigley F."/>
            <person name="Clabauld G."/>
            <person name="Muendlein A."/>
            <person name="Felber R."/>
            <person name="Schnabl S."/>
            <person name="Hiller R."/>
            <person name="Schmidt W."/>
            <person name="Lecharny A."/>
            <person name="Aubourg S."/>
            <person name="Chefdor F."/>
            <person name="Cooke R."/>
            <person name="Berger C."/>
            <person name="Monfort A."/>
            <person name="Casacuberta E."/>
            <person name="Gibbons T."/>
            <person name="Weber N."/>
            <person name="Vandenbol M."/>
            <person name="Bargues M."/>
            <person name="Terol J."/>
            <person name="Torres A."/>
            <person name="Perez-Perez A."/>
            <person name="Purnelle B."/>
            <person name="Bent E."/>
            <person name="Johnson S."/>
            <person name="Tacon D."/>
            <person name="Jesse T."/>
            <person name="Heijnen L."/>
            <person name="Schwarz S."/>
            <person name="Scholler P."/>
            <person name="Heber S."/>
            <person name="Francs P."/>
            <person name="Bielke C."/>
            <person name="Frishman D."/>
            <person name="Haase D."/>
            <person name="Lemcke K."/>
            <person name="Mewes H.-W."/>
            <person name="Stocker S."/>
            <person name="Zaccaria P."/>
            <person name="Bevan M."/>
            <person name="Wilson R.K."/>
            <person name="de la Bastide M."/>
            <person name="Habermann K."/>
            <person name="Parnell L."/>
            <person name="Dedhia N."/>
            <person name="Gnoj L."/>
            <person name="Schutz K."/>
            <person name="Huang E."/>
            <person name="Spiegel L."/>
            <person name="Sekhon M."/>
            <person name="Murray J."/>
            <person name="Sheet P."/>
            <person name="Cordes M."/>
            <person name="Abu-Threideh J."/>
            <person name="Stoneking T."/>
            <person name="Kalicki J."/>
            <person name="Graves T."/>
            <person name="Harmon G."/>
            <person name="Edwards J."/>
            <person name="Latreille P."/>
            <person name="Courtney L."/>
            <person name="Cloud J."/>
            <person name="Abbott A."/>
            <person name="Scott K."/>
            <person name="Johnson D."/>
            <person name="Minx P."/>
            <person name="Bentley D."/>
            <person name="Fulton B."/>
            <person name="Miller N."/>
            <person name="Greco T."/>
            <person name="Kemp K."/>
            <person name="Kramer J."/>
            <person name="Fulton L."/>
            <person name="Mardis E."/>
            <person name="Dante M."/>
            <person name="Pepin K."/>
            <person name="Hillier L.W."/>
            <person name="Nelson J."/>
            <person name="Spieth J."/>
            <person name="Ryan E."/>
            <person name="Andrews S."/>
            <person name="Geisel C."/>
            <person name="Layman D."/>
            <person name="Du H."/>
            <person name="Ali J."/>
            <person name="Berghoff A."/>
            <person name="Jones K."/>
            <person name="Drone K."/>
            <person name="Cotton M."/>
            <person name="Joshu C."/>
            <person name="Antonoiu B."/>
            <person name="Zidanic M."/>
            <person name="Strong C."/>
            <person name="Sun H."/>
            <person name="Lamar B."/>
            <person name="Yordan C."/>
            <person name="Ma P."/>
            <person name="Zhong J."/>
            <person name="Preston R."/>
            <person name="Vil D."/>
            <person name="Shekher M."/>
            <person name="Matero A."/>
            <person name="Shah R."/>
            <person name="Swaby I.K."/>
            <person name="O'Shaughnessy A."/>
            <person name="Rodriguez M."/>
            <person name="Hoffman J."/>
            <person name="Till S."/>
            <person name="Granat S."/>
            <person name="Shohdy N."/>
            <person name="Hasegawa A."/>
            <person name="Hameed A."/>
            <person name="Lodhi M."/>
            <person name="Johnson A."/>
            <person name="Chen E."/>
            <person name="Marra M.A."/>
            <person name="Martienssen R."/>
            <person name="McCombie W.R."/>
        </authorList>
    </citation>
    <scope>NUCLEOTIDE SEQUENCE [LARGE SCALE GENOMIC DNA]</scope>
    <source>
        <strain>cv. Columbia</strain>
    </source>
</reference>
<reference key="2">
    <citation type="journal article" date="2017" name="Plant J.">
        <title>Araport11: a complete reannotation of the Arabidopsis thaliana reference genome.</title>
        <authorList>
            <person name="Cheng C.Y."/>
            <person name="Krishnakumar V."/>
            <person name="Chan A.P."/>
            <person name="Thibaud-Nissen F."/>
            <person name="Schobel S."/>
            <person name="Town C.D."/>
        </authorList>
    </citation>
    <scope>GENOME REANNOTATION</scope>
    <source>
        <strain>cv. Columbia</strain>
    </source>
</reference>
<reference key="3">
    <citation type="journal article" date="2003" name="Science">
        <title>Empirical analysis of transcriptional activity in the Arabidopsis genome.</title>
        <authorList>
            <person name="Yamada K."/>
            <person name="Lim J."/>
            <person name="Dale J.M."/>
            <person name="Chen H."/>
            <person name="Shinn P."/>
            <person name="Palm C.J."/>
            <person name="Southwick A.M."/>
            <person name="Wu H.C."/>
            <person name="Kim C.J."/>
            <person name="Nguyen M."/>
            <person name="Pham P.K."/>
            <person name="Cheuk R.F."/>
            <person name="Karlin-Newmann G."/>
            <person name="Liu S.X."/>
            <person name="Lam B."/>
            <person name="Sakano H."/>
            <person name="Wu T."/>
            <person name="Yu G."/>
            <person name="Miranda M."/>
            <person name="Quach H.L."/>
            <person name="Tripp M."/>
            <person name="Chang C.H."/>
            <person name="Lee J.M."/>
            <person name="Toriumi M.J."/>
            <person name="Chan M.M."/>
            <person name="Tang C.C."/>
            <person name="Onodera C.S."/>
            <person name="Deng J.M."/>
            <person name="Akiyama K."/>
            <person name="Ansari Y."/>
            <person name="Arakawa T."/>
            <person name="Banh J."/>
            <person name="Banno F."/>
            <person name="Bowser L."/>
            <person name="Brooks S.Y."/>
            <person name="Carninci P."/>
            <person name="Chao Q."/>
            <person name="Choy N."/>
            <person name="Enju A."/>
            <person name="Goldsmith A.D."/>
            <person name="Gurjal M."/>
            <person name="Hansen N.F."/>
            <person name="Hayashizaki Y."/>
            <person name="Johnson-Hopson C."/>
            <person name="Hsuan V.W."/>
            <person name="Iida K."/>
            <person name="Karnes M."/>
            <person name="Khan S."/>
            <person name="Koesema E."/>
            <person name="Ishida J."/>
            <person name="Jiang P.X."/>
            <person name="Jones T."/>
            <person name="Kawai J."/>
            <person name="Kamiya A."/>
            <person name="Meyers C."/>
            <person name="Nakajima M."/>
            <person name="Narusaka M."/>
            <person name="Seki M."/>
            <person name="Sakurai T."/>
            <person name="Satou M."/>
            <person name="Tamse R."/>
            <person name="Vaysberg M."/>
            <person name="Wallender E.K."/>
            <person name="Wong C."/>
            <person name="Yamamura Y."/>
            <person name="Yuan S."/>
            <person name="Shinozaki K."/>
            <person name="Davis R.W."/>
            <person name="Theologis A."/>
            <person name="Ecker J.R."/>
        </authorList>
    </citation>
    <scope>NUCLEOTIDE SEQUENCE [LARGE SCALE MRNA]</scope>
    <source>
        <strain>cv. Columbia</strain>
    </source>
</reference>
<reference key="4">
    <citation type="journal article" date="2003" name="J. Biol. Chem.">
        <title>Biochemical diversity among the 1-amino-cyclopropane-1-carboxylate synthase isozymes encoded by the Arabidopsis gene family.</title>
        <authorList>
            <person name="Yamagami T."/>
            <person name="Tsuchisaka A."/>
            <person name="Yamada K."/>
            <person name="Haddon W.F."/>
            <person name="Harden L.A."/>
            <person name="Theologis A."/>
        </authorList>
    </citation>
    <scope>ENZYME ACTIVITY</scope>
    <scope>TISSUE SPECIFICITY</scope>
    <scope>INDUCTION</scope>
    <scope>PUTATIVE PROTEOLYTIC PROCESSING</scope>
</reference>
<reference key="5">
    <citation type="journal article" date="2014" name="Plant Cell">
        <title>The Arabidopsis 14-3-3 protein RARE COLD INDUCIBLE 1A links low-temperature response and ethylene biosynthesis to regulate freezing tolerance and cold acclimation.</title>
        <authorList>
            <person name="Catala R."/>
            <person name="Lopez-Cobollo R."/>
            <person name="Mar Castellano M."/>
            <person name="Angosto T."/>
            <person name="Alonso J.M."/>
            <person name="Ecker J.R."/>
            <person name="Salinas J."/>
        </authorList>
    </citation>
    <scope>INTERACTION WITH GRF3</scope>
</reference>
<protein>
    <recommendedName>
        <fullName>1-aminocyclopropane-1-carboxylate synthase 8</fullName>
        <shortName>ACC synthase 8</shortName>
        <ecNumber>4.4.1.14</ecNumber>
    </recommendedName>
    <alternativeName>
        <fullName>S-adenosyl-L-methionine methylthioadenosine-lyase 8</fullName>
    </alternativeName>
</protein>